<keyword id="KW-1015">Disulfide bond</keyword>
<keyword id="KW-0372">Hormone</keyword>
<keyword id="KW-1185">Reference proteome</keyword>
<keyword id="KW-0964">Secreted</keyword>
<keyword id="KW-0732">Signal</keyword>
<name>RLF29_ARATH</name>
<gene>
    <name type="primary">RALFL29</name>
    <name type="ordered locus">At4g11653</name>
    <name type="ORF">T5C23</name>
</gene>
<comment type="function">
    <text evidence="1">Cell signaling peptide that may regulate plant stress, growth, and development. Mediates a rapid alkalinization of extracellular space by mediating a transient increase in the cytoplasmic Ca(2+) concentration leading to a calcium-dependent signaling events through a cell surface receptor and a concomitant activation of some intracellular mitogen-activated protein kinases (By similarity).</text>
</comment>
<comment type="subcellular location">
    <subcellularLocation>
        <location evidence="1">Secreted</location>
    </subcellularLocation>
</comment>
<comment type="similarity">
    <text evidence="3">Belongs to the plant rapid alkalinization factor (RALF) family.</text>
</comment>
<protein>
    <recommendedName>
        <fullName>Protein RALF-like 29</fullName>
    </recommendedName>
</protein>
<sequence>MIKTKEVTFVTILIVLCVFISTIHAKRYIEYPIRLDLGKGCDPRFPTAACYKRTPANPYRRPCTTANRCRRSTSSTRVPSLKTFVEIPPM</sequence>
<feature type="signal peptide" evidence="2">
    <location>
        <begin position="1"/>
        <end position="25"/>
    </location>
</feature>
<feature type="chain" id="PRO_0000420327" description="Protein RALF-like 29">
    <location>
        <begin position="26"/>
        <end position="90"/>
    </location>
</feature>
<feature type="disulfide bond" evidence="1">
    <location>
        <begin position="41"/>
        <end position="50"/>
    </location>
</feature>
<feature type="disulfide bond" evidence="1">
    <location>
        <begin position="63"/>
        <end position="69"/>
    </location>
</feature>
<proteinExistence type="inferred from homology"/>
<dbReference type="EMBL" id="AL049500">
    <property type="status" value="NOT_ANNOTATED_CDS"/>
    <property type="molecule type" value="Genomic_DNA"/>
</dbReference>
<dbReference type="EMBL" id="AL161532">
    <property type="status" value="NOT_ANNOTATED_CDS"/>
    <property type="molecule type" value="Genomic_DNA"/>
</dbReference>
<dbReference type="EMBL" id="CP002687">
    <property type="protein sequence ID" value="AEE83034.1"/>
    <property type="molecule type" value="Genomic_DNA"/>
</dbReference>
<dbReference type="RefSeq" id="NP_001078374.1">
    <property type="nucleotide sequence ID" value="NM_001084905.2"/>
</dbReference>
<dbReference type="SMR" id="A8MQP2"/>
<dbReference type="STRING" id="3702.A8MQP2"/>
<dbReference type="PaxDb" id="3702-AT4G11653.1"/>
<dbReference type="EnsemblPlants" id="AT4G11653.1">
    <property type="protein sequence ID" value="AT4G11653.1"/>
    <property type="gene ID" value="AT4G11653"/>
</dbReference>
<dbReference type="GeneID" id="5008133"/>
<dbReference type="Gramene" id="AT4G11653.1">
    <property type="protein sequence ID" value="AT4G11653.1"/>
    <property type="gene ID" value="AT4G11653"/>
</dbReference>
<dbReference type="KEGG" id="ath:AT4G11653"/>
<dbReference type="Araport" id="AT4G11653"/>
<dbReference type="TAIR" id="AT4G11653">
    <property type="gene designation" value="RALFL29"/>
</dbReference>
<dbReference type="HOGENOM" id="CLU_189400_0_0_1"/>
<dbReference type="InParanoid" id="A8MQP2"/>
<dbReference type="OMA" id="LGKGCDP"/>
<dbReference type="OrthoDB" id="1040040at2759"/>
<dbReference type="PhylomeDB" id="A8MQP2"/>
<dbReference type="PRO" id="PR:A8MQP2"/>
<dbReference type="Proteomes" id="UP000006548">
    <property type="component" value="Chromosome 4"/>
</dbReference>
<dbReference type="ExpressionAtlas" id="A8MQP2">
    <property type="expression patterns" value="baseline and differential"/>
</dbReference>
<dbReference type="GO" id="GO:0048046">
    <property type="term" value="C:apoplast"/>
    <property type="evidence" value="ECO:0000250"/>
    <property type="project" value="TAIR"/>
</dbReference>
<dbReference type="GO" id="GO:0005179">
    <property type="term" value="F:hormone activity"/>
    <property type="evidence" value="ECO:0000250"/>
    <property type="project" value="UniProtKB"/>
</dbReference>
<dbReference type="GO" id="GO:0019722">
    <property type="term" value="P:calcium-mediated signaling"/>
    <property type="evidence" value="ECO:0000250"/>
    <property type="project" value="UniProtKB"/>
</dbReference>
<dbReference type="GO" id="GO:0007267">
    <property type="term" value="P:cell-cell signaling"/>
    <property type="evidence" value="ECO:0000250"/>
    <property type="project" value="TAIR"/>
</dbReference>
<dbReference type="GO" id="GO:0040008">
    <property type="term" value="P:regulation of growth"/>
    <property type="evidence" value="ECO:0007669"/>
    <property type="project" value="UniProtKB-ARBA"/>
</dbReference>
<dbReference type="InterPro" id="IPR008801">
    <property type="entry name" value="RALF"/>
</dbReference>
<dbReference type="PANTHER" id="PTHR34270">
    <property type="entry name" value="PROTEIN RALF-LIKE 15-RELATED"/>
    <property type="match status" value="1"/>
</dbReference>
<dbReference type="PANTHER" id="PTHR34270:SF3">
    <property type="entry name" value="PROTEIN RALF-LIKE 16-RELATED"/>
    <property type="match status" value="1"/>
</dbReference>
<dbReference type="Pfam" id="PF05498">
    <property type="entry name" value="RALF"/>
    <property type="match status" value="1"/>
</dbReference>
<evidence type="ECO:0000250" key="1"/>
<evidence type="ECO:0000255" key="2"/>
<evidence type="ECO:0000305" key="3"/>
<organism>
    <name type="scientific">Arabidopsis thaliana</name>
    <name type="common">Mouse-ear cress</name>
    <dbReference type="NCBI Taxonomy" id="3702"/>
    <lineage>
        <taxon>Eukaryota</taxon>
        <taxon>Viridiplantae</taxon>
        <taxon>Streptophyta</taxon>
        <taxon>Embryophyta</taxon>
        <taxon>Tracheophyta</taxon>
        <taxon>Spermatophyta</taxon>
        <taxon>Magnoliopsida</taxon>
        <taxon>eudicotyledons</taxon>
        <taxon>Gunneridae</taxon>
        <taxon>Pentapetalae</taxon>
        <taxon>rosids</taxon>
        <taxon>malvids</taxon>
        <taxon>Brassicales</taxon>
        <taxon>Brassicaceae</taxon>
        <taxon>Camelineae</taxon>
        <taxon>Arabidopsis</taxon>
    </lineage>
</organism>
<accession>A8MQP2</accession>
<reference key="1">
    <citation type="journal article" date="1999" name="Nature">
        <title>Sequence and analysis of chromosome 4 of the plant Arabidopsis thaliana.</title>
        <authorList>
            <person name="Mayer K.F.X."/>
            <person name="Schueller C."/>
            <person name="Wambutt R."/>
            <person name="Murphy G."/>
            <person name="Volckaert G."/>
            <person name="Pohl T."/>
            <person name="Duesterhoeft A."/>
            <person name="Stiekema W."/>
            <person name="Entian K.-D."/>
            <person name="Terryn N."/>
            <person name="Harris B."/>
            <person name="Ansorge W."/>
            <person name="Brandt P."/>
            <person name="Grivell L.A."/>
            <person name="Rieger M."/>
            <person name="Weichselgartner M."/>
            <person name="de Simone V."/>
            <person name="Obermaier B."/>
            <person name="Mache R."/>
            <person name="Mueller M."/>
            <person name="Kreis M."/>
            <person name="Delseny M."/>
            <person name="Puigdomenech P."/>
            <person name="Watson M."/>
            <person name="Schmidtheini T."/>
            <person name="Reichert B."/>
            <person name="Portetelle D."/>
            <person name="Perez-Alonso M."/>
            <person name="Boutry M."/>
            <person name="Bancroft I."/>
            <person name="Vos P."/>
            <person name="Hoheisel J."/>
            <person name="Zimmermann W."/>
            <person name="Wedler H."/>
            <person name="Ridley P."/>
            <person name="Langham S.-A."/>
            <person name="McCullagh B."/>
            <person name="Bilham L."/>
            <person name="Robben J."/>
            <person name="van der Schueren J."/>
            <person name="Grymonprez B."/>
            <person name="Chuang Y.-J."/>
            <person name="Vandenbussche F."/>
            <person name="Braeken M."/>
            <person name="Weltjens I."/>
            <person name="Voet M."/>
            <person name="Bastiaens I."/>
            <person name="Aert R."/>
            <person name="Defoor E."/>
            <person name="Weitzenegger T."/>
            <person name="Bothe G."/>
            <person name="Ramsperger U."/>
            <person name="Hilbert H."/>
            <person name="Braun M."/>
            <person name="Holzer E."/>
            <person name="Brandt A."/>
            <person name="Peters S."/>
            <person name="van Staveren M."/>
            <person name="Dirkse W."/>
            <person name="Mooijman P."/>
            <person name="Klein Lankhorst R."/>
            <person name="Rose M."/>
            <person name="Hauf J."/>
            <person name="Koetter P."/>
            <person name="Berneiser S."/>
            <person name="Hempel S."/>
            <person name="Feldpausch M."/>
            <person name="Lamberth S."/>
            <person name="Van den Daele H."/>
            <person name="De Keyser A."/>
            <person name="Buysshaert C."/>
            <person name="Gielen J."/>
            <person name="Villarroel R."/>
            <person name="De Clercq R."/>
            <person name="van Montagu M."/>
            <person name="Rogers J."/>
            <person name="Cronin A."/>
            <person name="Quail M.A."/>
            <person name="Bray-Allen S."/>
            <person name="Clark L."/>
            <person name="Doggett J."/>
            <person name="Hall S."/>
            <person name="Kay M."/>
            <person name="Lennard N."/>
            <person name="McLay K."/>
            <person name="Mayes R."/>
            <person name="Pettett A."/>
            <person name="Rajandream M.A."/>
            <person name="Lyne M."/>
            <person name="Benes V."/>
            <person name="Rechmann S."/>
            <person name="Borkova D."/>
            <person name="Bloecker H."/>
            <person name="Scharfe M."/>
            <person name="Grimm M."/>
            <person name="Loehnert T.-H."/>
            <person name="Dose S."/>
            <person name="de Haan M."/>
            <person name="Maarse A.C."/>
            <person name="Schaefer M."/>
            <person name="Mueller-Auer S."/>
            <person name="Gabel C."/>
            <person name="Fuchs M."/>
            <person name="Fartmann B."/>
            <person name="Granderath K."/>
            <person name="Dauner D."/>
            <person name="Herzl A."/>
            <person name="Neumann S."/>
            <person name="Argiriou A."/>
            <person name="Vitale D."/>
            <person name="Liguori R."/>
            <person name="Piravandi E."/>
            <person name="Massenet O."/>
            <person name="Quigley F."/>
            <person name="Clabauld G."/>
            <person name="Muendlein A."/>
            <person name="Felber R."/>
            <person name="Schnabl S."/>
            <person name="Hiller R."/>
            <person name="Schmidt W."/>
            <person name="Lecharny A."/>
            <person name="Aubourg S."/>
            <person name="Chefdor F."/>
            <person name="Cooke R."/>
            <person name="Berger C."/>
            <person name="Monfort A."/>
            <person name="Casacuberta E."/>
            <person name="Gibbons T."/>
            <person name="Weber N."/>
            <person name="Vandenbol M."/>
            <person name="Bargues M."/>
            <person name="Terol J."/>
            <person name="Torres A."/>
            <person name="Perez-Perez A."/>
            <person name="Purnelle B."/>
            <person name="Bent E."/>
            <person name="Johnson S."/>
            <person name="Tacon D."/>
            <person name="Jesse T."/>
            <person name="Heijnen L."/>
            <person name="Schwarz S."/>
            <person name="Scholler P."/>
            <person name="Heber S."/>
            <person name="Francs P."/>
            <person name="Bielke C."/>
            <person name="Frishman D."/>
            <person name="Haase D."/>
            <person name="Lemcke K."/>
            <person name="Mewes H.-W."/>
            <person name="Stocker S."/>
            <person name="Zaccaria P."/>
            <person name="Bevan M."/>
            <person name="Wilson R.K."/>
            <person name="de la Bastide M."/>
            <person name="Habermann K."/>
            <person name="Parnell L."/>
            <person name="Dedhia N."/>
            <person name="Gnoj L."/>
            <person name="Schutz K."/>
            <person name="Huang E."/>
            <person name="Spiegel L."/>
            <person name="Sekhon M."/>
            <person name="Murray J."/>
            <person name="Sheet P."/>
            <person name="Cordes M."/>
            <person name="Abu-Threideh J."/>
            <person name="Stoneking T."/>
            <person name="Kalicki J."/>
            <person name="Graves T."/>
            <person name="Harmon G."/>
            <person name="Edwards J."/>
            <person name="Latreille P."/>
            <person name="Courtney L."/>
            <person name="Cloud J."/>
            <person name="Abbott A."/>
            <person name="Scott K."/>
            <person name="Johnson D."/>
            <person name="Minx P."/>
            <person name="Bentley D."/>
            <person name="Fulton B."/>
            <person name="Miller N."/>
            <person name="Greco T."/>
            <person name="Kemp K."/>
            <person name="Kramer J."/>
            <person name="Fulton L."/>
            <person name="Mardis E."/>
            <person name="Dante M."/>
            <person name="Pepin K."/>
            <person name="Hillier L.W."/>
            <person name="Nelson J."/>
            <person name="Spieth J."/>
            <person name="Ryan E."/>
            <person name="Andrews S."/>
            <person name="Geisel C."/>
            <person name="Layman D."/>
            <person name="Du H."/>
            <person name="Ali J."/>
            <person name="Berghoff A."/>
            <person name="Jones K."/>
            <person name="Drone K."/>
            <person name="Cotton M."/>
            <person name="Joshu C."/>
            <person name="Antonoiu B."/>
            <person name="Zidanic M."/>
            <person name="Strong C."/>
            <person name="Sun H."/>
            <person name="Lamar B."/>
            <person name="Yordan C."/>
            <person name="Ma P."/>
            <person name="Zhong J."/>
            <person name="Preston R."/>
            <person name="Vil D."/>
            <person name="Shekher M."/>
            <person name="Matero A."/>
            <person name="Shah R."/>
            <person name="Swaby I.K."/>
            <person name="O'Shaughnessy A."/>
            <person name="Rodriguez M."/>
            <person name="Hoffman J."/>
            <person name="Till S."/>
            <person name="Granat S."/>
            <person name="Shohdy N."/>
            <person name="Hasegawa A."/>
            <person name="Hameed A."/>
            <person name="Lodhi M."/>
            <person name="Johnson A."/>
            <person name="Chen E."/>
            <person name="Marra M.A."/>
            <person name="Martienssen R."/>
            <person name="McCombie W.R."/>
        </authorList>
    </citation>
    <scope>NUCLEOTIDE SEQUENCE [LARGE SCALE GENOMIC DNA]</scope>
    <source>
        <strain>cv. Columbia</strain>
    </source>
</reference>
<reference key="2">
    <citation type="journal article" date="2017" name="Plant J.">
        <title>Araport11: a complete reannotation of the Arabidopsis thaliana reference genome.</title>
        <authorList>
            <person name="Cheng C.Y."/>
            <person name="Krishnakumar V."/>
            <person name="Chan A.P."/>
            <person name="Thibaud-Nissen F."/>
            <person name="Schobel S."/>
            <person name="Town C.D."/>
        </authorList>
    </citation>
    <scope>GENOME REANNOTATION</scope>
    <source>
        <strain>cv. Columbia</strain>
    </source>
</reference>
<reference key="3">
    <citation type="journal article" date="2002" name="In Silico Biol.">
        <title>Peptomics, identification of novel cationic Arabidopsis peptides with conserved sequence motifs.</title>
        <authorList>
            <person name="Olsen A.N."/>
            <person name="Mundy J."/>
            <person name="Skriver K."/>
        </authorList>
    </citation>
    <scope>GENE FAMILY</scope>
    <scope>NOMENCLATURE</scope>
</reference>